<feature type="chain" id="PRO_0000166051" description="Nitrate reductase [NADH], clone PBNBR1405">
    <location>
        <begin position="1"/>
        <end position="911"/>
    </location>
</feature>
<feature type="domain" description="Cytochrome b5 heme-binding" evidence="6">
    <location>
        <begin position="539"/>
        <end position="614"/>
    </location>
</feature>
<feature type="domain" description="FAD-binding FR-type" evidence="7">
    <location>
        <begin position="654"/>
        <end position="766"/>
    </location>
</feature>
<feature type="region of interest" description="Disordered" evidence="8">
    <location>
        <begin position="1"/>
        <end position="68"/>
    </location>
</feature>
<feature type="compositionally biased region" description="Basic and acidic residues" evidence="8">
    <location>
        <begin position="49"/>
        <end position="62"/>
    </location>
</feature>
<feature type="binding site" evidence="4">
    <location>
        <position position="191"/>
    </location>
    <ligand>
        <name>Mo-molybdopterin</name>
        <dbReference type="ChEBI" id="CHEBI:71302"/>
    </ligand>
    <ligandPart>
        <name>Mo</name>
        <dbReference type="ChEBI" id="CHEBI:28685"/>
    </ligandPart>
</feature>
<feature type="binding site" description="axial binding residue" evidence="6">
    <location>
        <position position="574"/>
    </location>
    <ligand>
        <name>heme</name>
        <dbReference type="ChEBI" id="CHEBI:30413"/>
    </ligand>
    <ligandPart>
        <name>Fe</name>
        <dbReference type="ChEBI" id="CHEBI:18248"/>
    </ligandPart>
</feature>
<feature type="binding site" description="axial binding residue" evidence="6">
    <location>
        <position position="597"/>
    </location>
    <ligand>
        <name>heme</name>
        <dbReference type="ChEBI" id="CHEBI:30413"/>
    </ligand>
    <ligandPart>
        <name>Fe</name>
        <dbReference type="ChEBI" id="CHEBI:18248"/>
    </ligandPart>
</feature>
<feature type="binding site" evidence="2">
    <location>
        <begin position="706"/>
        <end position="709"/>
    </location>
    <ligand>
        <name>FAD</name>
        <dbReference type="ChEBI" id="CHEBI:57692"/>
    </ligand>
</feature>
<feature type="binding site" evidence="2">
    <location>
        <begin position="723"/>
        <end position="727"/>
    </location>
    <ligand>
        <name>FAD</name>
        <dbReference type="ChEBI" id="CHEBI:57692"/>
    </ligand>
</feature>
<feature type="binding site" evidence="3">
    <location>
        <position position="728"/>
    </location>
    <ligand>
        <name>FAD</name>
        <dbReference type="ChEBI" id="CHEBI:57692"/>
    </ligand>
</feature>
<feature type="binding site" evidence="2">
    <location>
        <position position="735"/>
    </location>
    <ligand>
        <name>FAD</name>
        <dbReference type="ChEBI" id="CHEBI:57692"/>
    </ligand>
</feature>
<feature type="binding site" evidence="2">
    <location>
        <begin position="740"/>
        <end position="742"/>
    </location>
    <ligand>
        <name>FAD</name>
        <dbReference type="ChEBI" id="CHEBI:57692"/>
    </ligand>
</feature>
<feature type="binding site" evidence="2">
    <location>
        <position position="793"/>
    </location>
    <ligand>
        <name>FAD</name>
        <dbReference type="ChEBI" id="CHEBI:57692"/>
    </ligand>
</feature>
<feature type="disulfide bond" description="Interchain" evidence="5">
    <location>
        <position position="430"/>
    </location>
</feature>
<name>NIA1_BRANA</name>
<reference key="1">
    <citation type="journal article" date="1996" name="Plant Physiol.">
        <title>Developmental stage-specific and nitrate-independent regulation of nitrate reductase gene expression in rapeseed.</title>
        <authorList>
            <person name="Fukuoka H."/>
            <person name="Ogawa T."/>
            <person name="Minami H."/>
            <person name="Yano H."/>
            <person name="Ohkawa Y."/>
        </authorList>
    </citation>
    <scope>NUCLEOTIDE SEQUENCE [MRNA]</scope>
    <source>
        <strain>cv. Lisandra</strain>
    </source>
</reference>
<sequence length="911" mass="102252">MATSVDNRHYPRLSSALNGGVVHSFKPPLVPSPSLDRDQDQSVNVPTEKSVDKTTKEDRFDSSDDEDESHNRYVSYYKEMVLKSNSDLEPTALDSRDESTGDKWIHRNSSMVRLTGKHPFNAEAPLPRLMHHGFITPVPLHYVRNHGGVPKAEWSDWSVEVTGLVKRPAGLTMEQLISEFPSREFPVTLVCAGNRRKEQNMVKQTIGFNWGSAGVSTSLWRGVALSDVLRRCGVYSKRGGALNVCFEGAEDLPGGGGSKYGTSIKKEMAMDPARDIILAYMQNGELLTPDHGFPVRVIIPGFIGGRMVKWLKRIIVTPQESDNYYHYKDNRVLPSYVDAELPNEESWWYRPEYIINELNINSVITTPGHEEILPINAFTTQKPYTLKGYAYSGGGKKVTRVEVTLDGGETWSVCELDHQEKPNKYGKFWCWCFWSLDVEVLDLLSAKEVAVRAWDESLNTQPEKLIWNLMGMMNNCWFRIKTNVCKPHRGEIGIVFEHPTRPGNQSGGWMAKERQIEKSSESHPTLKKSVSTPFMNTASKMYSMSEVRKHNSAESAWIIVHGHIYDCTRFLKDHPGGSDSILINAGTDCTEEFEAIHSDKAKKLLEDYRIGELITTGYDSSPNVSVHGGSSVMSLLAPIRQLAPTKNIALVNPREKVPVKLIEKTSISHDVRRFRFALPSEDQQLGLPVGKHIFLCATINDKLCLRAYTPTSTVDAVGYIDLVIKVYFKNVHPRFPNGGLMSQHPDSLPIGAVLDIKGPLGHIEYQGRGKFMVSGKPKFANKLAMLAGGTGITPIYQVIQSILSDPEDETEMFVVYANRTEDDILVREELEGWASKFPDRLKIWYVVEIAKEGWEYSTGFITEAVLREHVPEGLEGESLALACGPPPMIQFALQPNLEKMGYDIKEDLLIF</sequence>
<dbReference type="EC" id="1.7.1.1"/>
<dbReference type="EMBL" id="D38219">
    <property type="protein sequence ID" value="BAA07394.1"/>
    <property type="molecule type" value="mRNA"/>
</dbReference>
<dbReference type="PIR" id="T08105">
    <property type="entry name" value="T08105"/>
</dbReference>
<dbReference type="RefSeq" id="NP_001302849.1">
    <property type="nucleotide sequence ID" value="NM_001315920.1"/>
</dbReference>
<dbReference type="SMR" id="P39867"/>
<dbReference type="GeneID" id="106400358"/>
<dbReference type="KEGG" id="bna:106400358"/>
<dbReference type="OrthoDB" id="432685at2759"/>
<dbReference type="GO" id="GO:0071949">
    <property type="term" value="F:FAD binding"/>
    <property type="evidence" value="ECO:0000250"/>
    <property type="project" value="UniProtKB"/>
</dbReference>
<dbReference type="GO" id="GO:0020037">
    <property type="term" value="F:heme binding"/>
    <property type="evidence" value="ECO:0007669"/>
    <property type="project" value="InterPro"/>
</dbReference>
<dbReference type="GO" id="GO:0030151">
    <property type="term" value="F:molybdenum ion binding"/>
    <property type="evidence" value="ECO:0000250"/>
    <property type="project" value="UniProtKB"/>
</dbReference>
<dbReference type="GO" id="GO:0043546">
    <property type="term" value="F:molybdopterin cofactor binding"/>
    <property type="evidence" value="ECO:0007669"/>
    <property type="project" value="InterPro"/>
</dbReference>
<dbReference type="GO" id="GO:0009703">
    <property type="term" value="F:nitrate reductase (NADH) activity"/>
    <property type="evidence" value="ECO:0007669"/>
    <property type="project" value="UniProtKB-EC"/>
</dbReference>
<dbReference type="GO" id="GO:0050464">
    <property type="term" value="F:nitrate reductase (NADPH) activity"/>
    <property type="evidence" value="ECO:0007669"/>
    <property type="project" value="InterPro"/>
</dbReference>
<dbReference type="GO" id="GO:0042128">
    <property type="term" value="P:nitrate assimilation"/>
    <property type="evidence" value="ECO:0007669"/>
    <property type="project" value="UniProtKB-KW"/>
</dbReference>
<dbReference type="GO" id="GO:0006809">
    <property type="term" value="P:nitric oxide biosynthetic process"/>
    <property type="evidence" value="ECO:0007669"/>
    <property type="project" value="InterPro"/>
</dbReference>
<dbReference type="CDD" id="cd06183">
    <property type="entry name" value="cyt_b5_reduct_like"/>
    <property type="match status" value="1"/>
</dbReference>
<dbReference type="CDD" id="cd02112">
    <property type="entry name" value="eukary_NR_Moco"/>
    <property type="match status" value="1"/>
</dbReference>
<dbReference type="FunFam" id="2.40.30.10:FF:000021">
    <property type="entry name" value="NADH-cytochrome b5 reductase"/>
    <property type="match status" value="1"/>
</dbReference>
<dbReference type="FunFam" id="2.60.40.650:FF:000001">
    <property type="entry name" value="Nitrate reductase"/>
    <property type="match status" value="1"/>
</dbReference>
<dbReference type="FunFam" id="3.10.120.10:FF:000008">
    <property type="entry name" value="Nitrate reductase"/>
    <property type="match status" value="1"/>
</dbReference>
<dbReference type="FunFam" id="3.90.420.10:FF:000003">
    <property type="entry name" value="Nitrate reductase"/>
    <property type="match status" value="1"/>
</dbReference>
<dbReference type="FunFam" id="3.40.50.80:FF:000025">
    <property type="entry name" value="Nitrate reductase [NADH]"/>
    <property type="match status" value="1"/>
</dbReference>
<dbReference type="Gene3D" id="2.60.40.650">
    <property type="match status" value="1"/>
</dbReference>
<dbReference type="Gene3D" id="3.10.120.10">
    <property type="entry name" value="Cytochrome b5-like heme/steroid binding domain"/>
    <property type="match status" value="1"/>
</dbReference>
<dbReference type="Gene3D" id="3.40.50.80">
    <property type="entry name" value="Nucleotide-binding domain of ferredoxin-NADP reductase (FNR) module"/>
    <property type="match status" value="1"/>
</dbReference>
<dbReference type="Gene3D" id="3.90.420.10">
    <property type="entry name" value="Oxidoreductase, molybdopterin-binding domain"/>
    <property type="match status" value="1"/>
</dbReference>
<dbReference type="Gene3D" id="2.40.30.10">
    <property type="entry name" value="Translation factors"/>
    <property type="match status" value="1"/>
</dbReference>
<dbReference type="InterPro" id="IPR008333">
    <property type="entry name" value="Cbr1-like_FAD-bd_dom"/>
</dbReference>
<dbReference type="InterPro" id="IPR001199">
    <property type="entry name" value="Cyt_B5-like_heme/steroid-bd"/>
</dbReference>
<dbReference type="InterPro" id="IPR036400">
    <property type="entry name" value="Cyt_B5-like_heme/steroid_sf"/>
</dbReference>
<dbReference type="InterPro" id="IPR018506">
    <property type="entry name" value="Cyt_B5_heme-BS"/>
</dbReference>
<dbReference type="InterPro" id="IPR017927">
    <property type="entry name" value="FAD-bd_FR_type"/>
</dbReference>
<dbReference type="InterPro" id="IPR001709">
    <property type="entry name" value="Flavoprot_Pyr_Nucl_cyt_Rdtase"/>
</dbReference>
<dbReference type="InterPro" id="IPR039261">
    <property type="entry name" value="FNR_nucleotide-bd"/>
</dbReference>
<dbReference type="InterPro" id="IPR014756">
    <property type="entry name" value="Ig_E-set"/>
</dbReference>
<dbReference type="InterPro" id="IPR005066">
    <property type="entry name" value="MoCF_OxRdtse_dimer"/>
</dbReference>
<dbReference type="InterPro" id="IPR008335">
    <property type="entry name" value="Mopterin_OxRdtase_euk"/>
</dbReference>
<dbReference type="InterPro" id="IPR012137">
    <property type="entry name" value="Nitr_rd_NADH"/>
</dbReference>
<dbReference type="InterPro" id="IPR001433">
    <property type="entry name" value="OxRdtase_FAD/NAD-bd"/>
</dbReference>
<dbReference type="InterPro" id="IPR000572">
    <property type="entry name" value="OxRdtase_Mopterin-bd_dom"/>
</dbReference>
<dbReference type="InterPro" id="IPR036374">
    <property type="entry name" value="OxRdtase_Mopterin-bd_sf"/>
</dbReference>
<dbReference type="InterPro" id="IPR022407">
    <property type="entry name" value="OxRdtase_Mopterin_BS"/>
</dbReference>
<dbReference type="InterPro" id="IPR017938">
    <property type="entry name" value="Riboflavin_synthase-like_b-brl"/>
</dbReference>
<dbReference type="PANTHER" id="PTHR19372:SF7">
    <property type="entry name" value="SULFITE OXIDASE, MITOCHONDRIAL"/>
    <property type="match status" value="1"/>
</dbReference>
<dbReference type="PANTHER" id="PTHR19372">
    <property type="entry name" value="SULFITE REDUCTASE"/>
    <property type="match status" value="1"/>
</dbReference>
<dbReference type="Pfam" id="PF00173">
    <property type="entry name" value="Cyt-b5"/>
    <property type="match status" value="1"/>
</dbReference>
<dbReference type="Pfam" id="PF00970">
    <property type="entry name" value="FAD_binding_6"/>
    <property type="match status" value="1"/>
</dbReference>
<dbReference type="Pfam" id="PF03404">
    <property type="entry name" value="Mo-co_dimer"/>
    <property type="match status" value="1"/>
</dbReference>
<dbReference type="Pfam" id="PF00175">
    <property type="entry name" value="NAD_binding_1"/>
    <property type="match status" value="1"/>
</dbReference>
<dbReference type="Pfam" id="PF00174">
    <property type="entry name" value="Oxidored_molyb"/>
    <property type="match status" value="1"/>
</dbReference>
<dbReference type="PIRSF" id="PIRSF000233">
    <property type="entry name" value="Nitr_rd_NADH"/>
    <property type="match status" value="1"/>
</dbReference>
<dbReference type="PRINTS" id="PR00406">
    <property type="entry name" value="CYTB5RDTASE"/>
</dbReference>
<dbReference type="PRINTS" id="PR00363">
    <property type="entry name" value="CYTOCHROMEB5"/>
</dbReference>
<dbReference type="PRINTS" id="PR00407">
    <property type="entry name" value="EUMOPTERIN"/>
</dbReference>
<dbReference type="PRINTS" id="PR00371">
    <property type="entry name" value="FPNCR"/>
</dbReference>
<dbReference type="SMART" id="SM01117">
    <property type="entry name" value="Cyt-b5"/>
    <property type="match status" value="1"/>
</dbReference>
<dbReference type="SUPFAM" id="SSF55856">
    <property type="entry name" value="Cytochrome b5-like heme/steroid binding domain"/>
    <property type="match status" value="1"/>
</dbReference>
<dbReference type="SUPFAM" id="SSF81296">
    <property type="entry name" value="E set domains"/>
    <property type="match status" value="1"/>
</dbReference>
<dbReference type="SUPFAM" id="SSF52343">
    <property type="entry name" value="Ferredoxin reductase-like, C-terminal NADP-linked domain"/>
    <property type="match status" value="1"/>
</dbReference>
<dbReference type="SUPFAM" id="SSF56524">
    <property type="entry name" value="Oxidoreductase molybdopterin-binding domain"/>
    <property type="match status" value="1"/>
</dbReference>
<dbReference type="SUPFAM" id="SSF63380">
    <property type="entry name" value="Riboflavin synthase domain-like"/>
    <property type="match status" value="1"/>
</dbReference>
<dbReference type="PROSITE" id="PS00191">
    <property type="entry name" value="CYTOCHROME_B5_1"/>
    <property type="match status" value="1"/>
</dbReference>
<dbReference type="PROSITE" id="PS50255">
    <property type="entry name" value="CYTOCHROME_B5_2"/>
    <property type="match status" value="1"/>
</dbReference>
<dbReference type="PROSITE" id="PS51384">
    <property type="entry name" value="FAD_FR"/>
    <property type="match status" value="1"/>
</dbReference>
<dbReference type="PROSITE" id="PS00559">
    <property type="entry name" value="MOLYBDOPTERIN_EUK"/>
    <property type="match status" value="1"/>
</dbReference>
<keyword id="KW-1015">Disulfide bond</keyword>
<keyword id="KW-0274">FAD</keyword>
<keyword id="KW-0285">Flavoprotein</keyword>
<keyword id="KW-0349">Heme</keyword>
<keyword id="KW-0408">Iron</keyword>
<keyword id="KW-0479">Metal-binding</keyword>
<keyword id="KW-0500">Molybdenum</keyword>
<keyword id="KW-0520">NAD</keyword>
<keyword id="KW-0534">Nitrate assimilation</keyword>
<keyword id="KW-0560">Oxidoreductase</keyword>
<protein>
    <recommendedName>
        <fullName>Nitrate reductase [NADH], clone PBNBR1405</fullName>
        <shortName>NR</shortName>
        <ecNumber>1.7.1.1</ecNumber>
    </recommendedName>
</protein>
<proteinExistence type="evidence at transcript level"/>
<accession>P39867</accession>
<evidence type="ECO:0000250" key="1"/>
<evidence type="ECO:0000250" key="2">
    <source>
        <dbReference type="UniProtKB" id="A0A286R227"/>
    </source>
</evidence>
<evidence type="ECO:0000250" key="3">
    <source>
        <dbReference type="UniProtKB" id="P17571"/>
    </source>
</evidence>
<evidence type="ECO:0000250" key="4">
    <source>
        <dbReference type="UniProtKB" id="P49050"/>
    </source>
</evidence>
<evidence type="ECO:0000255" key="5"/>
<evidence type="ECO:0000255" key="6">
    <source>
        <dbReference type="PROSITE-ProRule" id="PRU00279"/>
    </source>
</evidence>
<evidence type="ECO:0000255" key="7">
    <source>
        <dbReference type="PROSITE-ProRule" id="PRU00716"/>
    </source>
</evidence>
<evidence type="ECO:0000256" key="8">
    <source>
        <dbReference type="SAM" id="MobiDB-lite"/>
    </source>
</evidence>
<evidence type="ECO:0000305" key="9"/>
<organism>
    <name type="scientific">Brassica napus</name>
    <name type="common">Rape</name>
    <dbReference type="NCBI Taxonomy" id="3708"/>
    <lineage>
        <taxon>Eukaryota</taxon>
        <taxon>Viridiplantae</taxon>
        <taxon>Streptophyta</taxon>
        <taxon>Embryophyta</taxon>
        <taxon>Tracheophyta</taxon>
        <taxon>Spermatophyta</taxon>
        <taxon>Magnoliopsida</taxon>
        <taxon>eudicotyledons</taxon>
        <taxon>Gunneridae</taxon>
        <taxon>Pentapetalae</taxon>
        <taxon>rosids</taxon>
        <taxon>malvids</taxon>
        <taxon>Brassicales</taxon>
        <taxon>Brassicaceae</taxon>
        <taxon>Brassiceae</taxon>
        <taxon>Brassica</taxon>
    </lineage>
</organism>
<gene>
    <name type="primary">NIA1</name>
</gene>
<comment type="function">
    <text>Nitrate reductase is a key enzyme involved in the first step of nitrate assimilation in plants, fungi and bacteria.</text>
</comment>
<comment type="catalytic activity">
    <reaction>
        <text>nitrite + NAD(+) + H2O = nitrate + NADH + H(+)</text>
        <dbReference type="Rhea" id="RHEA:17913"/>
        <dbReference type="ChEBI" id="CHEBI:15377"/>
        <dbReference type="ChEBI" id="CHEBI:15378"/>
        <dbReference type="ChEBI" id="CHEBI:16301"/>
        <dbReference type="ChEBI" id="CHEBI:17632"/>
        <dbReference type="ChEBI" id="CHEBI:57540"/>
        <dbReference type="ChEBI" id="CHEBI:57945"/>
        <dbReference type="EC" id="1.7.1.1"/>
    </reaction>
</comment>
<comment type="cofactor">
    <cofactor evidence="1">
        <name>FAD</name>
        <dbReference type="ChEBI" id="CHEBI:57692"/>
    </cofactor>
    <text evidence="1">Binds 1 FAD.</text>
</comment>
<comment type="cofactor">
    <cofactor evidence="1">
        <name>heme</name>
        <dbReference type="ChEBI" id="CHEBI:30413"/>
    </cofactor>
    <text evidence="1">Binds 1 heme group. The heme group is called cytochrome b-557.</text>
</comment>
<comment type="cofactor">
    <cofactor evidence="1">
        <name>Mo-molybdopterin</name>
        <dbReference type="ChEBI" id="CHEBI:71302"/>
    </cofactor>
    <text evidence="1">Binds 1 Mo-molybdopterin (Mo-MPT) cofactor per subunit.</text>
</comment>
<comment type="subunit">
    <text evidence="1">Homodimer.</text>
</comment>
<comment type="similarity">
    <text evidence="9">Belongs to the nitrate reductase family.</text>
</comment>